<protein>
    <recommendedName>
        <fullName evidence="1">Large ribosomal subunit protein uL29</fullName>
    </recommendedName>
    <alternativeName>
        <fullName evidence="2">50S ribosomal protein L29</fullName>
    </alternativeName>
</protein>
<gene>
    <name evidence="1" type="primary">rpmC</name>
    <name type="ordered locus">Avi_1848</name>
</gene>
<reference key="1">
    <citation type="journal article" date="2009" name="J. Bacteriol.">
        <title>Genome sequences of three Agrobacterium biovars help elucidate the evolution of multichromosome genomes in bacteria.</title>
        <authorList>
            <person name="Slater S.C."/>
            <person name="Goldman B.S."/>
            <person name="Goodner B."/>
            <person name="Setubal J.C."/>
            <person name="Farrand S.K."/>
            <person name="Nester E.W."/>
            <person name="Burr T.J."/>
            <person name="Banta L."/>
            <person name="Dickerman A.W."/>
            <person name="Paulsen I."/>
            <person name="Otten L."/>
            <person name="Suen G."/>
            <person name="Welch R."/>
            <person name="Almeida N.F."/>
            <person name="Arnold F."/>
            <person name="Burton O.T."/>
            <person name="Du Z."/>
            <person name="Ewing A."/>
            <person name="Godsy E."/>
            <person name="Heisel S."/>
            <person name="Houmiel K.L."/>
            <person name="Jhaveri J."/>
            <person name="Lu J."/>
            <person name="Miller N.M."/>
            <person name="Norton S."/>
            <person name="Chen Q."/>
            <person name="Phoolcharoen W."/>
            <person name="Ohlin V."/>
            <person name="Ondrusek D."/>
            <person name="Pride N."/>
            <person name="Stricklin S.L."/>
            <person name="Sun J."/>
            <person name="Wheeler C."/>
            <person name="Wilson L."/>
            <person name="Zhu H."/>
            <person name="Wood D.W."/>
        </authorList>
    </citation>
    <scope>NUCLEOTIDE SEQUENCE [LARGE SCALE GENOMIC DNA]</scope>
    <source>
        <strain>ATCC BAA-846 / DSM 112012 / S4</strain>
    </source>
</reference>
<name>RL29_ALLAM</name>
<keyword id="KW-1185">Reference proteome</keyword>
<keyword id="KW-0687">Ribonucleoprotein</keyword>
<keyword id="KW-0689">Ribosomal protein</keyword>
<evidence type="ECO:0000255" key="1">
    <source>
        <dbReference type="HAMAP-Rule" id="MF_00374"/>
    </source>
</evidence>
<evidence type="ECO:0000305" key="2"/>
<accession>B9JVP5</accession>
<organism>
    <name type="scientific">Allorhizobium ampelinum (strain ATCC BAA-846 / DSM 112012 / S4)</name>
    <name type="common">Agrobacterium vitis (strain S4)</name>
    <dbReference type="NCBI Taxonomy" id="311402"/>
    <lineage>
        <taxon>Bacteria</taxon>
        <taxon>Pseudomonadati</taxon>
        <taxon>Pseudomonadota</taxon>
        <taxon>Alphaproteobacteria</taxon>
        <taxon>Hyphomicrobiales</taxon>
        <taxon>Rhizobiaceae</taxon>
        <taxon>Rhizobium/Agrobacterium group</taxon>
        <taxon>Allorhizobium</taxon>
        <taxon>Allorhizobium ampelinum</taxon>
    </lineage>
</organism>
<sequence length="66" mass="7417">MKAADARAMSADQLKDELGNLKKEQFNLRFQKATGQLEKSSRINEVRKDIARVKTIARQKAAEAKA</sequence>
<feature type="chain" id="PRO_1000193992" description="Large ribosomal subunit protein uL29">
    <location>
        <begin position="1"/>
        <end position="66"/>
    </location>
</feature>
<proteinExistence type="inferred from homology"/>
<comment type="similarity">
    <text evidence="1">Belongs to the universal ribosomal protein uL29 family.</text>
</comment>
<dbReference type="EMBL" id="CP000633">
    <property type="protein sequence ID" value="ACM36325.1"/>
    <property type="molecule type" value="Genomic_DNA"/>
</dbReference>
<dbReference type="RefSeq" id="WP_015915746.1">
    <property type="nucleotide sequence ID" value="NC_011989.1"/>
</dbReference>
<dbReference type="SMR" id="B9JVP5"/>
<dbReference type="STRING" id="311402.Avi_1848"/>
<dbReference type="GeneID" id="60682411"/>
<dbReference type="KEGG" id="avi:Avi_1848"/>
<dbReference type="eggNOG" id="COG0255">
    <property type="taxonomic scope" value="Bacteria"/>
</dbReference>
<dbReference type="HOGENOM" id="CLU_158491_1_0_5"/>
<dbReference type="Proteomes" id="UP000001596">
    <property type="component" value="Chromosome 1"/>
</dbReference>
<dbReference type="GO" id="GO:0022625">
    <property type="term" value="C:cytosolic large ribosomal subunit"/>
    <property type="evidence" value="ECO:0007669"/>
    <property type="project" value="TreeGrafter"/>
</dbReference>
<dbReference type="GO" id="GO:0003735">
    <property type="term" value="F:structural constituent of ribosome"/>
    <property type="evidence" value="ECO:0007669"/>
    <property type="project" value="InterPro"/>
</dbReference>
<dbReference type="GO" id="GO:0006412">
    <property type="term" value="P:translation"/>
    <property type="evidence" value="ECO:0007669"/>
    <property type="project" value="UniProtKB-UniRule"/>
</dbReference>
<dbReference type="CDD" id="cd00427">
    <property type="entry name" value="Ribosomal_L29_HIP"/>
    <property type="match status" value="1"/>
</dbReference>
<dbReference type="FunFam" id="1.10.287.310:FF:000001">
    <property type="entry name" value="50S ribosomal protein L29"/>
    <property type="match status" value="1"/>
</dbReference>
<dbReference type="Gene3D" id="1.10.287.310">
    <property type="match status" value="1"/>
</dbReference>
<dbReference type="HAMAP" id="MF_00374">
    <property type="entry name" value="Ribosomal_uL29"/>
    <property type="match status" value="1"/>
</dbReference>
<dbReference type="InterPro" id="IPR050063">
    <property type="entry name" value="Ribosomal_protein_uL29"/>
</dbReference>
<dbReference type="InterPro" id="IPR001854">
    <property type="entry name" value="Ribosomal_uL29"/>
</dbReference>
<dbReference type="InterPro" id="IPR018254">
    <property type="entry name" value="Ribosomal_uL29_CS"/>
</dbReference>
<dbReference type="InterPro" id="IPR036049">
    <property type="entry name" value="Ribosomal_uL29_sf"/>
</dbReference>
<dbReference type="NCBIfam" id="TIGR00012">
    <property type="entry name" value="L29"/>
    <property type="match status" value="1"/>
</dbReference>
<dbReference type="PANTHER" id="PTHR10916">
    <property type="entry name" value="60S RIBOSOMAL PROTEIN L35/50S RIBOSOMAL PROTEIN L29"/>
    <property type="match status" value="1"/>
</dbReference>
<dbReference type="PANTHER" id="PTHR10916:SF0">
    <property type="entry name" value="LARGE RIBOSOMAL SUBUNIT PROTEIN UL29C"/>
    <property type="match status" value="1"/>
</dbReference>
<dbReference type="Pfam" id="PF00831">
    <property type="entry name" value="Ribosomal_L29"/>
    <property type="match status" value="1"/>
</dbReference>
<dbReference type="SUPFAM" id="SSF46561">
    <property type="entry name" value="Ribosomal protein L29 (L29p)"/>
    <property type="match status" value="1"/>
</dbReference>
<dbReference type="PROSITE" id="PS00579">
    <property type="entry name" value="RIBOSOMAL_L29"/>
    <property type="match status" value="1"/>
</dbReference>